<accession>A0RQI8</accession>
<name>RL1_CAMFF</name>
<comment type="function">
    <text evidence="1">Binds directly to 23S rRNA. The L1 stalk is quite mobile in the ribosome, and is involved in E site tRNA release.</text>
</comment>
<comment type="function">
    <text evidence="1">Protein L1 is also a translational repressor protein, it controls the translation of the L11 operon by binding to its mRNA.</text>
</comment>
<comment type="subunit">
    <text evidence="1">Part of the 50S ribosomal subunit.</text>
</comment>
<comment type="similarity">
    <text evidence="1">Belongs to the universal ribosomal protein uL1 family.</text>
</comment>
<sequence length="234" mass="24970">MSKKVTKRFSELLKKVDSDKIYTLDEAVSTVKTLASAKFDETVEIALKLNVDPRHADQMVRGSVVLPAGTGKTVRVAVIAKDAKADEAKAAGADIVGAEDFVDEIAKGVINFDVLIATPNLMGLVGKIGRLLGPKGLMPNPKTGTVTMDVAQAIKNAKGGQVNFRVDKQGNIHAGLGKVSFSKDQLNDNISAFIKMINKHKPAASKGRYIKSAALSLTMSPSITLEPQELMDLK</sequence>
<protein>
    <recommendedName>
        <fullName evidence="1">Large ribosomal subunit protein uL1</fullName>
    </recommendedName>
    <alternativeName>
        <fullName evidence="2">50S ribosomal protein L1</fullName>
    </alternativeName>
</protein>
<organism>
    <name type="scientific">Campylobacter fetus subsp. fetus (strain 82-40)</name>
    <dbReference type="NCBI Taxonomy" id="360106"/>
    <lineage>
        <taxon>Bacteria</taxon>
        <taxon>Pseudomonadati</taxon>
        <taxon>Campylobacterota</taxon>
        <taxon>Epsilonproteobacteria</taxon>
        <taxon>Campylobacterales</taxon>
        <taxon>Campylobacteraceae</taxon>
        <taxon>Campylobacter</taxon>
    </lineage>
</organism>
<gene>
    <name evidence="1" type="primary">rplA</name>
    <name type="ordered locus">CFF8240_1319</name>
</gene>
<proteinExistence type="inferred from homology"/>
<keyword id="KW-0678">Repressor</keyword>
<keyword id="KW-0687">Ribonucleoprotein</keyword>
<keyword id="KW-0689">Ribosomal protein</keyword>
<keyword id="KW-0694">RNA-binding</keyword>
<keyword id="KW-0699">rRNA-binding</keyword>
<keyword id="KW-0810">Translation regulation</keyword>
<keyword id="KW-0820">tRNA-binding</keyword>
<evidence type="ECO:0000255" key="1">
    <source>
        <dbReference type="HAMAP-Rule" id="MF_01318"/>
    </source>
</evidence>
<evidence type="ECO:0000305" key="2"/>
<dbReference type="EMBL" id="CP000487">
    <property type="protein sequence ID" value="ABK82200.1"/>
    <property type="molecule type" value="Genomic_DNA"/>
</dbReference>
<dbReference type="RefSeq" id="WP_002850119.1">
    <property type="nucleotide sequence ID" value="NC_008599.1"/>
</dbReference>
<dbReference type="SMR" id="A0RQI8"/>
<dbReference type="GeneID" id="61065137"/>
<dbReference type="KEGG" id="cff:CFF8240_1319"/>
<dbReference type="eggNOG" id="COG0081">
    <property type="taxonomic scope" value="Bacteria"/>
</dbReference>
<dbReference type="HOGENOM" id="CLU_062853_0_0_7"/>
<dbReference type="Proteomes" id="UP000000760">
    <property type="component" value="Chromosome"/>
</dbReference>
<dbReference type="GO" id="GO:0022625">
    <property type="term" value="C:cytosolic large ribosomal subunit"/>
    <property type="evidence" value="ECO:0007669"/>
    <property type="project" value="TreeGrafter"/>
</dbReference>
<dbReference type="GO" id="GO:0019843">
    <property type="term" value="F:rRNA binding"/>
    <property type="evidence" value="ECO:0007669"/>
    <property type="project" value="UniProtKB-UniRule"/>
</dbReference>
<dbReference type="GO" id="GO:0003735">
    <property type="term" value="F:structural constituent of ribosome"/>
    <property type="evidence" value="ECO:0007669"/>
    <property type="project" value="InterPro"/>
</dbReference>
<dbReference type="GO" id="GO:0000049">
    <property type="term" value="F:tRNA binding"/>
    <property type="evidence" value="ECO:0007669"/>
    <property type="project" value="UniProtKB-KW"/>
</dbReference>
<dbReference type="GO" id="GO:0006417">
    <property type="term" value="P:regulation of translation"/>
    <property type="evidence" value="ECO:0007669"/>
    <property type="project" value="UniProtKB-KW"/>
</dbReference>
<dbReference type="GO" id="GO:0006412">
    <property type="term" value="P:translation"/>
    <property type="evidence" value="ECO:0007669"/>
    <property type="project" value="UniProtKB-UniRule"/>
</dbReference>
<dbReference type="CDD" id="cd00403">
    <property type="entry name" value="Ribosomal_L1"/>
    <property type="match status" value="1"/>
</dbReference>
<dbReference type="FunFam" id="3.40.50.790:FF:000001">
    <property type="entry name" value="50S ribosomal protein L1"/>
    <property type="match status" value="1"/>
</dbReference>
<dbReference type="Gene3D" id="3.30.190.20">
    <property type="match status" value="1"/>
</dbReference>
<dbReference type="Gene3D" id="3.40.50.790">
    <property type="match status" value="1"/>
</dbReference>
<dbReference type="HAMAP" id="MF_01318_B">
    <property type="entry name" value="Ribosomal_uL1_B"/>
    <property type="match status" value="1"/>
</dbReference>
<dbReference type="InterPro" id="IPR005878">
    <property type="entry name" value="Ribosom_uL1_bac-type"/>
</dbReference>
<dbReference type="InterPro" id="IPR002143">
    <property type="entry name" value="Ribosomal_uL1"/>
</dbReference>
<dbReference type="InterPro" id="IPR023674">
    <property type="entry name" value="Ribosomal_uL1-like"/>
</dbReference>
<dbReference type="InterPro" id="IPR028364">
    <property type="entry name" value="Ribosomal_uL1/biogenesis"/>
</dbReference>
<dbReference type="InterPro" id="IPR016095">
    <property type="entry name" value="Ribosomal_uL1_3-a/b-sand"/>
</dbReference>
<dbReference type="InterPro" id="IPR023673">
    <property type="entry name" value="Ribosomal_uL1_CS"/>
</dbReference>
<dbReference type="NCBIfam" id="TIGR01169">
    <property type="entry name" value="rplA_bact"/>
    <property type="match status" value="1"/>
</dbReference>
<dbReference type="PANTHER" id="PTHR36427">
    <property type="entry name" value="54S RIBOSOMAL PROTEIN L1, MITOCHONDRIAL"/>
    <property type="match status" value="1"/>
</dbReference>
<dbReference type="PANTHER" id="PTHR36427:SF3">
    <property type="entry name" value="LARGE RIBOSOMAL SUBUNIT PROTEIN UL1M"/>
    <property type="match status" value="1"/>
</dbReference>
<dbReference type="Pfam" id="PF00687">
    <property type="entry name" value="Ribosomal_L1"/>
    <property type="match status" value="1"/>
</dbReference>
<dbReference type="PIRSF" id="PIRSF002155">
    <property type="entry name" value="Ribosomal_L1"/>
    <property type="match status" value="1"/>
</dbReference>
<dbReference type="SUPFAM" id="SSF56808">
    <property type="entry name" value="Ribosomal protein L1"/>
    <property type="match status" value="1"/>
</dbReference>
<dbReference type="PROSITE" id="PS01199">
    <property type="entry name" value="RIBOSOMAL_L1"/>
    <property type="match status" value="1"/>
</dbReference>
<feature type="chain" id="PRO_0000307983" description="Large ribosomal subunit protein uL1">
    <location>
        <begin position="1"/>
        <end position="234"/>
    </location>
</feature>
<reference key="1">
    <citation type="submission" date="2006-11" db="EMBL/GenBank/DDBJ databases">
        <title>Sequence of Campylobacter fetus subsp. fetus 82-40.</title>
        <authorList>
            <person name="Fouts D.E."/>
            <person name="Nelson K.E."/>
        </authorList>
    </citation>
    <scope>NUCLEOTIDE SEQUENCE [LARGE SCALE GENOMIC DNA]</scope>
    <source>
        <strain>82-40</strain>
    </source>
</reference>